<name>DDRD_DEIRA</name>
<evidence type="ECO:0000256" key="1">
    <source>
        <dbReference type="SAM" id="MobiDB-lite"/>
    </source>
</evidence>
<evidence type="ECO:0000269" key="2">
    <source>
    </source>
</evidence>
<sequence length="198" mass="21157">MDTLKKAGTMLAHLDLFHSMLDLRRLLQLAAYMKERGDRAMLISAGEITLIGSESMTAPEVVTSKGETIDAATAYRVLGQLEGYEAPEYAVNREALAALNARAVAELEGSEALRAFGDTLARISAAPTDPAGPERPGTDRAERTAAERTASERATHDRASTERPARPRRSAEPEAVRTEDAPQPNAEASEAGENTPAA</sequence>
<gene>
    <name type="primary">ddrD</name>
    <name type="ordered locus">DR_0326</name>
</gene>
<accession>Q9RXI7</accession>
<reference key="1">
    <citation type="journal article" date="1999" name="Science">
        <title>Genome sequence of the radioresistant bacterium Deinococcus radiodurans R1.</title>
        <authorList>
            <person name="White O."/>
            <person name="Eisen J.A."/>
            <person name="Heidelberg J.F."/>
            <person name="Hickey E.K."/>
            <person name="Peterson J.D."/>
            <person name="Dodson R.J."/>
            <person name="Haft D.H."/>
            <person name="Gwinn M.L."/>
            <person name="Nelson W.C."/>
            <person name="Richardson D.L."/>
            <person name="Moffat K.S."/>
            <person name="Qin H."/>
            <person name="Jiang L."/>
            <person name="Pamphile W."/>
            <person name="Crosby M."/>
            <person name="Shen M."/>
            <person name="Vamathevan J.J."/>
            <person name="Lam P."/>
            <person name="McDonald L.A."/>
            <person name="Utterback T.R."/>
            <person name="Zalewski C."/>
            <person name="Makarova K.S."/>
            <person name="Aravind L."/>
            <person name="Daly M.J."/>
            <person name="Minton K.W."/>
            <person name="Fleischmann R.D."/>
            <person name="Ketchum K.A."/>
            <person name="Nelson K.E."/>
            <person name="Salzberg S.L."/>
            <person name="Smith H.O."/>
            <person name="Venter J.C."/>
            <person name="Fraser C.M."/>
        </authorList>
    </citation>
    <scope>NUCLEOTIDE SEQUENCE [LARGE SCALE GENOMIC DNA]</scope>
    <source>
        <strain>ATCC 13939 / DSM 20539 / JCM 16871 / CCUG 27074 / LMG 4051 / NBRC 15346 / NCIMB 9279 / VKM B-1422 / R1</strain>
    </source>
</reference>
<reference key="2">
    <citation type="journal article" date="2004" name="Genetics">
        <title>Analysis of Deinococcus radiodurans's transcriptional response to ionizing radiation and desiccation reveals novel proteins that contribute to extreme radioresistance.</title>
        <authorList>
            <person name="Tanaka M."/>
            <person name="Earl A.M."/>
            <person name="Howell H.A."/>
            <person name="Park M.J."/>
            <person name="Eisen J.A."/>
            <person name="Peterson S.N."/>
            <person name="Battista J.R."/>
        </authorList>
    </citation>
    <scope>INDUCTION</scope>
    <scope>ROLE IN RADIORESISTANCE</scope>
    <scope>DISRUPTION PHENOTYPE</scope>
    <source>
        <strain>ATCC 13939 / DSM 20539 / JCM 16871 / CCUG 27074 / LMG 4051 / NBRC 15346 / NCIMB 9279 / VKM B-1422 / R1</strain>
    </source>
</reference>
<proteinExistence type="evidence at transcript level"/>
<comment type="function">
    <text evidence="2">Appears to contribute to D.radiodurans capacity to survive exposure to ionizing radiation. May play a role in DNA repair and genome reconstitution.</text>
</comment>
<comment type="induction">
    <text evidence="2">Induced to high levels following extreme ionizing radiation exposure. Also highly induced in response to desiccation stress.</text>
</comment>
<comment type="disruption phenotype">
    <text evidence="2">Cells lacking this gene show a normal growth rate, do not exhibit a decrease in the efficiency of natural transformation, and is as resistant to ionizing radiation as wild-type. However, deletion of the ddrC gene decreases the ionizing radiation resistance of the recA mutant strain, and appears to increase that of the pprA mutant strain. Moreover, cells lacking both ddrC and ddrD exhibit a slight (two-fold) increase in sensitivity to ionizing radiation, but this phenotype is apparent only at the highest applied doses.</text>
</comment>
<keyword id="KW-0227">DNA damage</keyword>
<keyword id="KW-0234">DNA repair</keyword>
<keyword id="KW-1185">Reference proteome</keyword>
<keyword id="KW-0346">Stress response</keyword>
<protein>
    <recommendedName>
        <fullName>DNA damage response protein D</fullName>
    </recommendedName>
</protein>
<organism>
    <name type="scientific">Deinococcus radiodurans (strain ATCC 13939 / DSM 20539 / JCM 16871 / CCUG 27074 / LMG 4051 / NBRC 15346 / NCIMB 9279 / VKM B-1422 / R1)</name>
    <dbReference type="NCBI Taxonomy" id="243230"/>
    <lineage>
        <taxon>Bacteria</taxon>
        <taxon>Thermotogati</taxon>
        <taxon>Deinococcota</taxon>
        <taxon>Deinococci</taxon>
        <taxon>Deinococcales</taxon>
        <taxon>Deinococcaceae</taxon>
        <taxon>Deinococcus</taxon>
    </lineage>
</organism>
<feature type="chain" id="PRO_0000394494" description="DNA damage response protein D">
    <location>
        <begin position="1"/>
        <end position="198"/>
    </location>
</feature>
<feature type="region of interest" description="Disordered" evidence="1">
    <location>
        <begin position="124"/>
        <end position="198"/>
    </location>
</feature>
<feature type="compositionally biased region" description="Basic and acidic residues" evidence="1">
    <location>
        <begin position="136"/>
        <end position="180"/>
    </location>
</feature>
<dbReference type="EMBL" id="AE000513">
    <property type="protein sequence ID" value="AAF09913.1"/>
    <property type="molecule type" value="Genomic_DNA"/>
</dbReference>
<dbReference type="PIR" id="C75532">
    <property type="entry name" value="C75532"/>
</dbReference>
<dbReference type="RefSeq" id="NP_294049.1">
    <property type="nucleotide sequence ID" value="NC_001263.1"/>
</dbReference>
<dbReference type="RefSeq" id="WP_010886971.1">
    <property type="nucleotide sequence ID" value="NC_001263.1"/>
</dbReference>
<dbReference type="STRING" id="243230.DR_0326"/>
<dbReference type="PaxDb" id="243230-DR_0326"/>
<dbReference type="EnsemblBacteria" id="AAF09913">
    <property type="protein sequence ID" value="AAF09913"/>
    <property type="gene ID" value="DR_0326"/>
</dbReference>
<dbReference type="GeneID" id="69516558"/>
<dbReference type="KEGG" id="dra:DR_0326"/>
<dbReference type="PATRIC" id="fig|243230.17.peg.492"/>
<dbReference type="HOGENOM" id="CLU_1583810_0_0_0"/>
<dbReference type="InParanoid" id="Q9RXI7"/>
<dbReference type="OrthoDB" id="69167at2"/>
<dbReference type="Proteomes" id="UP000002524">
    <property type="component" value="Chromosome 1"/>
</dbReference>
<dbReference type="GO" id="GO:0071465">
    <property type="term" value="P:cellular response to desiccation"/>
    <property type="evidence" value="ECO:0000270"/>
    <property type="project" value="UniProtKB"/>
</dbReference>
<dbReference type="GO" id="GO:0071480">
    <property type="term" value="P:cellular response to gamma radiation"/>
    <property type="evidence" value="ECO:0000270"/>
    <property type="project" value="UniProtKB"/>
</dbReference>
<dbReference type="GO" id="GO:0006974">
    <property type="term" value="P:DNA damage response"/>
    <property type="evidence" value="ECO:0000270"/>
    <property type="project" value="UniProtKB"/>
</dbReference>
<dbReference type="GO" id="GO:0006281">
    <property type="term" value="P:DNA repair"/>
    <property type="evidence" value="ECO:0007669"/>
    <property type="project" value="UniProtKB-KW"/>
</dbReference>